<evidence type="ECO:0000255" key="1">
    <source>
        <dbReference type="HAMAP-Rule" id="MF_02068"/>
    </source>
</evidence>
<gene>
    <name type="ordered locus">VP1320</name>
</gene>
<reference key="1">
    <citation type="journal article" date="2003" name="Lancet">
        <title>Genome sequence of Vibrio parahaemolyticus: a pathogenic mechanism distinct from that of V. cholerae.</title>
        <authorList>
            <person name="Makino K."/>
            <person name="Oshima K."/>
            <person name="Kurokawa K."/>
            <person name="Yokoyama K."/>
            <person name="Uda T."/>
            <person name="Tagomori K."/>
            <person name="Iijima Y."/>
            <person name="Najima M."/>
            <person name="Nakano M."/>
            <person name="Yamashita A."/>
            <person name="Kubota Y."/>
            <person name="Kimura S."/>
            <person name="Yasunaga T."/>
            <person name="Honda T."/>
            <person name="Shinagawa H."/>
            <person name="Hattori M."/>
            <person name="Iida T."/>
        </authorList>
    </citation>
    <scope>NUCLEOTIDE SEQUENCE [LARGE SCALE GENOMIC DNA]</scope>
    <source>
        <strain>RIMD 2210633</strain>
    </source>
</reference>
<sequence length="238" mass="27076">MNVALIFAGGVGTRMQNSTKPKQFLELYNKPVIIYTLEKFEENKNIDAIVVVCVEPWIDYLRKLLFKFDIQKVKFVIPGGETGQESIFNGLCKIEEEFDHNSVVLIHDGVRPLINDEIINRNIEAVKSHGSAITTCPPVETFVLVDNEDVVKDVHDRSLSRLAKAPQSFYLRDILKVHRQAREDCYTEAIDSCSLMTKYGYDVRLVSGISENIKITSPIDFFIFKAIIDTQENLQVFG</sequence>
<keyword id="KW-0548">Nucleotidyltransferase</keyword>
<keyword id="KW-0808">Transferase</keyword>
<feature type="chain" id="PRO_0000075645" description="Ribitol-5-phosphate cytidylyltransferase">
    <location>
        <begin position="1"/>
        <end position="238"/>
    </location>
</feature>
<feature type="binding site" evidence="1">
    <location>
        <begin position="7"/>
        <end position="10"/>
    </location>
    <ligand>
        <name>CTP</name>
        <dbReference type="ChEBI" id="CHEBI:37563"/>
    </ligand>
</feature>
<feature type="binding site" evidence="1">
    <location>
        <begin position="80"/>
        <end position="86"/>
    </location>
    <ligand>
        <name>CTP</name>
        <dbReference type="ChEBI" id="CHEBI:37563"/>
    </ligand>
</feature>
<feature type="site" description="Transition state stabilizer" evidence="1">
    <location>
        <position position="14"/>
    </location>
</feature>
<feature type="site" description="Transition state stabilizer" evidence="1">
    <location>
        <position position="22"/>
    </location>
</feature>
<feature type="site" description="Positions ribitol 5-phosphate for the nucleophilic attack" evidence="1">
    <location>
        <position position="157"/>
    </location>
</feature>
<feature type="site" description="Positions ribitol 5-phosphate for the nucleophilic attack" evidence="1">
    <location>
        <position position="214"/>
    </location>
</feature>
<accession>Q87Q30</accession>
<proteinExistence type="inferred from homology"/>
<protein>
    <recommendedName>
        <fullName evidence="1">Ribitol-5-phosphate cytidylyltransferase</fullName>
        <ecNumber evidence="1">2.7.7.40</ecNumber>
    </recommendedName>
</protein>
<dbReference type="EC" id="2.7.7.40" evidence="1"/>
<dbReference type="EMBL" id="BA000031">
    <property type="protein sequence ID" value="BAC59583.1"/>
    <property type="molecule type" value="Genomic_DNA"/>
</dbReference>
<dbReference type="RefSeq" id="NP_797699.1">
    <property type="nucleotide sequence ID" value="NC_004603.1"/>
</dbReference>
<dbReference type="RefSeq" id="WP_005454982.1">
    <property type="nucleotide sequence ID" value="NC_004603.1"/>
</dbReference>
<dbReference type="SMR" id="Q87Q30"/>
<dbReference type="GeneID" id="1188825"/>
<dbReference type="KEGG" id="vpa:VP1320"/>
<dbReference type="PATRIC" id="fig|223926.6.peg.1262"/>
<dbReference type="eggNOG" id="COG1211">
    <property type="taxonomic scope" value="Bacteria"/>
</dbReference>
<dbReference type="HOGENOM" id="CLU_061281_2_3_6"/>
<dbReference type="Proteomes" id="UP000002493">
    <property type="component" value="Chromosome 1"/>
</dbReference>
<dbReference type="GO" id="GO:0005829">
    <property type="term" value="C:cytosol"/>
    <property type="evidence" value="ECO:0007669"/>
    <property type="project" value="TreeGrafter"/>
</dbReference>
<dbReference type="GO" id="GO:0047349">
    <property type="term" value="F:D-ribitol-5-phosphate cytidylyltransferase activity"/>
    <property type="evidence" value="ECO:0007669"/>
    <property type="project" value="UniProtKB-UniRule"/>
</dbReference>
<dbReference type="GO" id="GO:0008299">
    <property type="term" value="P:isoprenoid biosynthetic process"/>
    <property type="evidence" value="ECO:0007669"/>
    <property type="project" value="InterPro"/>
</dbReference>
<dbReference type="CDD" id="cd02516">
    <property type="entry name" value="CDP-ME_synthetase"/>
    <property type="match status" value="1"/>
</dbReference>
<dbReference type="FunFam" id="3.90.550.10:FF:000003">
    <property type="entry name" value="2-C-methyl-D-erythritol 4-phosphate cytidylyltransferase"/>
    <property type="match status" value="1"/>
</dbReference>
<dbReference type="Gene3D" id="3.90.550.10">
    <property type="entry name" value="Spore Coat Polysaccharide Biosynthesis Protein SpsA, Chain A"/>
    <property type="match status" value="1"/>
</dbReference>
<dbReference type="HAMAP" id="MF_02068">
    <property type="entry name" value="TarI"/>
    <property type="match status" value="1"/>
</dbReference>
<dbReference type="InterPro" id="IPR034683">
    <property type="entry name" value="IspD/TarI"/>
</dbReference>
<dbReference type="InterPro" id="IPR018294">
    <property type="entry name" value="ISPD_synthase_CS"/>
</dbReference>
<dbReference type="InterPro" id="IPR029044">
    <property type="entry name" value="Nucleotide-diphossugar_trans"/>
</dbReference>
<dbReference type="InterPro" id="IPR034709">
    <property type="entry name" value="TarI"/>
</dbReference>
<dbReference type="NCBIfam" id="NF001183">
    <property type="entry name" value="PRK00155.1-3"/>
    <property type="match status" value="1"/>
</dbReference>
<dbReference type="PANTHER" id="PTHR43015">
    <property type="entry name" value="D-RIBITOL-5-PHOSPHATE CYTIDYLYLTRANSFERASE"/>
    <property type="match status" value="1"/>
</dbReference>
<dbReference type="PANTHER" id="PTHR43015:SF1">
    <property type="entry name" value="D-RIBITOL-5-PHOSPHATE CYTIDYLYLTRANSFERASE"/>
    <property type="match status" value="1"/>
</dbReference>
<dbReference type="Pfam" id="PF01128">
    <property type="entry name" value="IspD"/>
    <property type="match status" value="1"/>
</dbReference>
<dbReference type="SUPFAM" id="SSF53448">
    <property type="entry name" value="Nucleotide-diphospho-sugar transferases"/>
    <property type="match status" value="1"/>
</dbReference>
<dbReference type="PROSITE" id="PS01295">
    <property type="entry name" value="ISPD"/>
    <property type="match status" value="1"/>
</dbReference>
<name>TARI_VIBPA</name>
<comment type="function">
    <text evidence="1">Catalyzes the transfer of the cytidylyl group of CTP to D-ribitol 5-phosphate.</text>
</comment>
<comment type="catalytic activity">
    <reaction evidence="1">
        <text>D-ribitol 5-phosphate + CTP + H(+) = CDP-L-ribitol + diphosphate</text>
        <dbReference type="Rhea" id="RHEA:12456"/>
        <dbReference type="ChEBI" id="CHEBI:15378"/>
        <dbReference type="ChEBI" id="CHEBI:33019"/>
        <dbReference type="ChEBI" id="CHEBI:37563"/>
        <dbReference type="ChEBI" id="CHEBI:57608"/>
        <dbReference type="ChEBI" id="CHEBI:57695"/>
        <dbReference type="EC" id="2.7.7.40"/>
    </reaction>
</comment>
<comment type="similarity">
    <text evidence="1">Belongs to the IspD/TarI cytidylyltransferase family. TarI subfamily.</text>
</comment>
<organism>
    <name type="scientific">Vibrio parahaemolyticus serotype O3:K6 (strain RIMD 2210633)</name>
    <dbReference type="NCBI Taxonomy" id="223926"/>
    <lineage>
        <taxon>Bacteria</taxon>
        <taxon>Pseudomonadati</taxon>
        <taxon>Pseudomonadota</taxon>
        <taxon>Gammaproteobacteria</taxon>
        <taxon>Vibrionales</taxon>
        <taxon>Vibrionaceae</taxon>
        <taxon>Vibrio</taxon>
    </lineage>
</organism>